<keyword id="KW-0328">Glycosyltransferase</keyword>
<keyword id="KW-0808">Transferase</keyword>
<reference key="1">
    <citation type="submission" date="1997-07" db="EMBL/GenBank/DDBJ databases">
        <authorList>
            <person name="Duwat P."/>
            <person name="Ehrlich S.D."/>
            <person name="Gruss A."/>
        </authorList>
    </citation>
    <scope>NUCLEOTIDE SEQUENCE [GENOMIC DNA]</scope>
</reference>
<reference key="2">
    <citation type="journal article" date="2007" name="J. Bacteriol.">
        <title>The complete genome sequence of the lactic acid bacterial paradigm Lactococcus lactis subsp. cremoris MG1363.</title>
        <authorList>
            <person name="Wegmann U."/>
            <person name="O'Connell-Motherway M."/>
            <person name="Zomer A."/>
            <person name="Buist G."/>
            <person name="Shearman C."/>
            <person name="Canchaya C."/>
            <person name="Ventura M."/>
            <person name="Goesmann A."/>
            <person name="Gasson M.J."/>
            <person name="Kuipers O.P."/>
            <person name="van Sinderen D."/>
            <person name="Kok J."/>
        </authorList>
    </citation>
    <scope>NUCLEOTIDE SEQUENCE [LARGE SCALE GENOMIC DNA]</scope>
    <source>
        <strain>MG1363</strain>
    </source>
</reference>
<accession>O32810</accession>
<accession>A2RLK5</accession>
<dbReference type="EC" id="2.4.2.1" evidence="2"/>
<dbReference type="EMBL" id="U80410">
    <property type="protein sequence ID" value="AAC45498.1"/>
    <property type="molecule type" value="Genomic_DNA"/>
</dbReference>
<dbReference type="EMBL" id="AM406671">
    <property type="protein sequence ID" value="CAL98173.1"/>
    <property type="molecule type" value="Genomic_DNA"/>
</dbReference>
<dbReference type="RefSeq" id="WP_011675883.1">
    <property type="nucleotide sequence ID" value="NC_009004.1"/>
</dbReference>
<dbReference type="SMR" id="O32810"/>
<dbReference type="STRING" id="416870.llmg_1599"/>
<dbReference type="GeneID" id="61109229"/>
<dbReference type="KEGG" id="llm:llmg_1599"/>
<dbReference type="eggNOG" id="COG0813">
    <property type="taxonomic scope" value="Bacteria"/>
</dbReference>
<dbReference type="HOGENOM" id="CLU_068457_2_0_9"/>
<dbReference type="OrthoDB" id="9782889at2"/>
<dbReference type="PhylomeDB" id="O32810"/>
<dbReference type="Proteomes" id="UP000000364">
    <property type="component" value="Chromosome"/>
</dbReference>
<dbReference type="GO" id="GO:0005829">
    <property type="term" value="C:cytosol"/>
    <property type="evidence" value="ECO:0007669"/>
    <property type="project" value="TreeGrafter"/>
</dbReference>
<dbReference type="GO" id="GO:0004731">
    <property type="term" value="F:purine-nucleoside phosphorylase activity"/>
    <property type="evidence" value="ECO:0007669"/>
    <property type="project" value="UniProtKB-UniRule"/>
</dbReference>
<dbReference type="GO" id="GO:0006152">
    <property type="term" value="P:purine nucleoside catabolic process"/>
    <property type="evidence" value="ECO:0007669"/>
    <property type="project" value="TreeGrafter"/>
</dbReference>
<dbReference type="CDD" id="cd09006">
    <property type="entry name" value="PNP_EcPNPI-like"/>
    <property type="match status" value="1"/>
</dbReference>
<dbReference type="Gene3D" id="3.40.50.1580">
    <property type="entry name" value="Nucleoside phosphorylase domain"/>
    <property type="match status" value="1"/>
</dbReference>
<dbReference type="HAMAP" id="MF_01627">
    <property type="entry name" value="Pur_nucleosid_phosp"/>
    <property type="match status" value="1"/>
</dbReference>
<dbReference type="InterPro" id="IPR004402">
    <property type="entry name" value="DeoD-type"/>
</dbReference>
<dbReference type="InterPro" id="IPR018016">
    <property type="entry name" value="Nucleoside_phosphorylase_CS"/>
</dbReference>
<dbReference type="InterPro" id="IPR000845">
    <property type="entry name" value="Nucleoside_phosphorylase_d"/>
</dbReference>
<dbReference type="InterPro" id="IPR035994">
    <property type="entry name" value="Nucleoside_phosphorylase_sf"/>
</dbReference>
<dbReference type="NCBIfam" id="TIGR00107">
    <property type="entry name" value="deoD"/>
    <property type="match status" value="1"/>
</dbReference>
<dbReference type="NCBIfam" id="NF004489">
    <property type="entry name" value="PRK05819.1"/>
    <property type="match status" value="1"/>
</dbReference>
<dbReference type="PANTHER" id="PTHR43691:SF11">
    <property type="entry name" value="FI09636P-RELATED"/>
    <property type="match status" value="1"/>
</dbReference>
<dbReference type="PANTHER" id="PTHR43691">
    <property type="entry name" value="URIDINE PHOSPHORYLASE"/>
    <property type="match status" value="1"/>
</dbReference>
<dbReference type="Pfam" id="PF01048">
    <property type="entry name" value="PNP_UDP_1"/>
    <property type="match status" value="1"/>
</dbReference>
<dbReference type="SUPFAM" id="SSF53167">
    <property type="entry name" value="Purine and uridine phosphorylases"/>
    <property type="match status" value="1"/>
</dbReference>
<dbReference type="PROSITE" id="PS01232">
    <property type="entry name" value="PNP_UDP_1"/>
    <property type="match status" value="1"/>
</dbReference>
<comment type="function">
    <text evidence="2">Catalyzes the reversible phosphorolytic breakdown of the N-glycosidic bond in the beta-(deoxy)ribonucleoside molecules, with the formation of the corresponding free purine bases and pentose-1-phosphate.</text>
</comment>
<comment type="catalytic activity">
    <reaction evidence="2">
        <text>a purine D-ribonucleoside + phosphate = a purine nucleobase + alpha-D-ribose 1-phosphate</text>
        <dbReference type="Rhea" id="RHEA:19805"/>
        <dbReference type="ChEBI" id="CHEBI:26386"/>
        <dbReference type="ChEBI" id="CHEBI:43474"/>
        <dbReference type="ChEBI" id="CHEBI:57720"/>
        <dbReference type="ChEBI" id="CHEBI:142355"/>
        <dbReference type="EC" id="2.4.2.1"/>
    </reaction>
</comment>
<comment type="catalytic activity">
    <reaction evidence="2">
        <text>a purine 2'-deoxy-D-ribonucleoside + phosphate = a purine nucleobase + 2-deoxy-alpha-D-ribose 1-phosphate</text>
        <dbReference type="Rhea" id="RHEA:36431"/>
        <dbReference type="ChEBI" id="CHEBI:26386"/>
        <dbReference type="ChEBI" id="CHEBI:43474"/>
        <dbReference type="ChEBI" id="CHEBI:57259"/>
        <dbReference type="ChEBI" id="CHEBI:142361"/>
        <dbReference type="EC" id="2.4.2.1"/>
    </reaction>
</comment>
<comment type="subunit">
    <text evidence="2">Homohexamer; trimer of homodimers.</text>
</comment>
<comment type="similarity">
    <text evidence="2">Belongs to the PNP/UDP phosphorylase family.</text>
</comment>
<name>DEOD_LACLM</name>
<feature type="chain" id="PRO_0000063140" description="Purine nucleoside phosphorylase DeoD-type">
    <location>
        <begin position="1"/>
        <end position="234"/>
    </location>
</feature>
<feature type="active site" description="Proton donor" evidence="2">
    <location>
        <position position="203"/>
    </location>
</feature>
<feature type="binding site" evidence="1">
    <location>
        <position position="5"/>
    </location>
    <ligand>
        <name>a purine D-ribonucleoside</name>
        <dbReference type="ChEBI" id="CHEBI:142355"/>
        <note>ligand shared between dimeric partners</note>
    </ligand>
</feature>
<feature type="binding site" description="in other chain" evidence="1">
    <location>
        <position position="21"/>
    </location>
    <ligand>
        <name>phosphate</name>
        <dbReference type="ChEBI" id="CHEBI:43474"/>
        <note>ligand shared between dimeric partners</note>
    </ligand>
</feature>
<feature type="binding site" description="in other chain" evidence="1">
    <location>
        <position position="25"/>
    </location>
    <ligand>
        <name>phosphate</name>
        <dbReference type="ChEBI" id="CHEBI:43474"/>
        <note>ligand shared between dimeric partners</note>
    </ligand>
</feature>
<feature type="binding site" evidence="1">
    <location>
        <position position="44"/>
    </location>
    <ligand>
        <name>phosphate</name>
        <dbReference type="ChEBI" id="CHEBI:43474"/>
        <note>ligand shared between dimeric partners</note>
    </ligand>
</feature>
<feature type="binding site" description="in other chain" evidence="1">
    <location>
        <begin position="88"/>
        <end position="91"/>
    </location>
    <ligand>
        <name>phosphate</name>
        <dbReference type="ChEBI" id="CHEBI:43474"/>
        <note>ligand shared between dimeric partners</note>
    </ligand>
</feature>
<feature type="binding site" description="in other chain" evidence="1">
    <location>
        <begin position="178"/>
        <end position="180"/>
    </location>
    <ligand>
        <name>a purine D-ribonucleoside</name>
        <dbReference type="ChEBI" id="CHEBI:142355"/>
        <note>ligand shared between dimeric partners</note>
    </ligand>
</feature>
<feature type="binding site" description="in other chain" evidence="1">
    <location>
        <begin position="202"/>
        <end position="203"/>
    </location>
    <ligand>
        <name>a purine D-ribonucleoside</name>
        <dbReference type="ChEBI" id="CHEBI:142355"/>
        <note>ligand shared between dimeric partners</note>
    </ligand>
</feature>
<feature type="site" description="Important for catalytic activity" evidence="2">
    <location>
        <position position="216"/>
    </location>
</feature>
<sequence length="234" mass="25420">MPTPHIEAQKGEIADKILLPGDPLRAKFIAENFLEDAVQFNQVRGMLGFTGTYKGHRVSVMGTGMGIPSISIYANELITEYGVKRLIRVGTAGSVNEDVHIRDLVIGQAAATTSAIVRHDFPDFDFPQIADFDLLDKAYHIAKDLGITTHVGNILSSDLFYGGPDAVKVGKLGVKAVEMEAAGLYYLGAKYKVQTLGIMTISDHILTGESTTSEERQLTFTDMMKVGLETLIAE</sequence>
<evidence type="ECO:0000250" key="1">
    <source>
        <dbReference type="UniProtKB" id="P50389"/>
    </source>
</evidence>
<evidence type="ECO:0000255" key="2">
    <source>
        <dbReference type="HAMAP-Rule" id="MF_01627"/>
    </source>
</evidence>
<proteinExistence type="inferred from homology"/>
<organism>
    <name type="scientific">Lactococcus lactis subsp. cremoris (strain MG1363)</name>
    <dbReference type="NCBI Taxonomy" id="416870"/>
    <lineage>
        <taxon>Bacteria</taxon>
        <taxon>Bacillati</taxon>
        <taxon>Bacillota</taxon>
        <taxon>Bacilli</taxon>
        <taxon>Lactobacillales</taxon>
        <taxon>Streptococcaceae</taxon>
        <taxon>Lactococcus</taxon>
        <taxon>Lactococcus cremoris subsp. cremoris</taxon>
    </lineage>
</organism>
<protein>
    <recommendedName>
        <fullName evidence="2">Purine nucleoside phosphorylase DeoD-type</fullName>
        <shortName evidence="2">PNP</shortName>
        <ecNumber evidence="2">2.4.2.1</ecNumber>
    </recommendedName>
</protein>
<gene>
    <name evidence="2" type="primary">deoD</name>
    <name type="ordered locus">llmg_1599</name>
</gene>